<organism>
    <name type="scientific">Vibrio atlanticus (strain LGP32)</name>
    <name type="common">Vibrio splendidus (strain Mel32)</name>
    <dbReference type="NCBI Taxonomy" id="575788"/>
    <lineage>
        <taxon>Bacteria</taxon>
        <taxon>Pseudomonadati</taxon>
        <taxon>Pseudomonadota</taxon>
        <taxon>Gammaproteobacteria</taxon>
        <taxon>Vibrionales</taxon>
        <taxon>Vibrionaceae</taxon>
        <taxon>Vibrio</taxon>
    </lineage>
</organism>
<accession>B7VSZ6</accession>
<dbReference type="EC" id="2.1.1.-" evidence="1"/>
<dbReference type="EMBL" id="FM954973">
    <property type="protein sequence ID" value="CAV27241.1"/>
    <property type="molecule type" value="Genomic_DNA"/>
</dbReference>
<dbReference type="SMR" id="B7VSZ6"/>
<dbReference type="STRING" id="575788.VS_II1248"/>
<dbReference type="KEGG" id="vsp:VS_II1248"/>
<dbReference type="PATRIC" id="fig|575788.5.peg.1159"/>
<dbReference type="eggNOG" id="COG1901">
    <property type="taxonomic scope" value="Bacteria"/>
</dbReference>
<dbReference type="HOGENOM" id="CLU_107018_0_0_6"/>
<dbReference type="Proteomes" id="UP000009100">
    <property type="component" value="Chromosome 2"/>
</dbReference>
<dbReference type="GO" id="GO:0005737">
    <property type="term" value="C:cytoplasm"/>
    <property type="evidence" value="ECO:0007669"/>
    <property type="project" value="UniProtKB-SubCell"/>
</dbReference>
<dbReference type="GO" id="GO:0008757">
    <property type="term" value="F:S-adenosylmethionine-dependent methyltransferase activity"/>
    <property type="evidence" value="ECO:0007669"/>
    <property type="project" value="UniProtKB-UniRule"/>
</dbReference>
<dbReference type="GO" id="GO:0008175">
    <property type="term" value="F:tRNA methyltransferase activity"/>
    <property type="evidence" value="ECO:0007669"/>
    <property type="project" value="InterPro"/>
</dbReference>
<dbReference type="GO" id="GO:0030488">
    <property type="term" value="P:tRNA methylation"/>
    <property type="evidence" value="ECO:0007669"/>
    <property type="project" value="TreeGrafter"/>
</dbReference>
<dbReference type="CDD" id="cd18087">
    <property type="entry name" value="TrmY-like"/>
    <property type="match status" value="1"/>
</dbReference>
<dbReference type="Gene3D" id="3.40.1280.10">
    <property type="match status" value="1"/>
</dbReference>
<dbReference type="HAMAP" id="MF_00587">
    <property type="entry name" value="tRNA_methyltr_TrmY"/>
    <property type="match status" value="1"/>
</dbReference>
<dbReference type="InterPro" id="IPR029028">
    <property type="entry name" value="Alpha/beta_knot_MTases"/>
</dbReference>
<dbReference type="InterPro" id="IPR007158">
    <property type="entry name" value="TrmY"/>
</dbReference>
<dbReference type="InterPro" id="IPR029026">
    <property type="entry name" value="tRNA_m1G_MTases_N"/>
</dbReference>
<dbReference type="NCBIfam" id="NF002560">
    <property type="entry name" value="PRK02135.1"/>
    <property type="match status" value="1"/>
</dbReference>
<dbReference type="PANTHER" id="PTHR40703">
    <property type="entry name" value="TRNA (PSEUDOURIDINE(54)-N(1))-METHYLTRANSFERASE"/>
    <property type="match status" value="1"/>
</dbReference>
<dbReference type="PANTHER" id="PTHR40703:SF1">
    <property type="entry name" value="TRNA (PSEUDOURIDINE(54)-N(1))-METHYLTRANSFERASE"/>
    <property type="match status" value="1"/>
</dbReference>
<dbReference type="Pfam" id="PF04013">
    <property type="entry name" value="Methyltrn_RNA_2"/>
    <property type="match status" value="1"/>
</dbReference>
<dbReference type="SUPFAM" id="SSF75217">
    <property type="entry name" value="alpha/beta knot"/>
    <property type="match status" value="1"/>
</dbReference>
<reference key="1">
    <citation type="submission" date="2009-02" db="EMBL/GenBank/DDBJ databases">
        <title>Vibrio splendidus str. LGP32 complete genome.</title>
        <authorList>
            <person name="Mazel D."/>
            <person name="Le Roux F."/>
        </authorList>
    </citation>
    <scope>NUCLEOTIDE SEQUENCE [LARGE SCALE GENOMIC DNA]</scope>
    <source>
        <strain>LGP32</strain>
    </source>
</reference>
<proteinExistence type="inferred from homology"/>
<name>TRMYL_VIBA3</name>
<comment type="subcellular location">
    <subcellularLocation>
        <location evidence="1">Cytoplasm</location>
    </subcellularLocation>
</comment>
<comment type="similarity">
    <text evidence="1">Belongs to the methyltransferase superfamily. TrmY family.</text>
</comment>
<evidence type="ECO:0000255" key="1">
    <source>
        <dbReference type="HAMAP-Rule" id="MF_00587"/>
    </source>
</evidence>
<protein>
    <recommendedName>
        <fullName evidence="1">Putative pseudouridine methyltransferase</fullName>
        <ecNumber evidence="1">2.1.1.-</ecNumber>
    </recommendedName>
</protein>
<feature type="chain" id="PRO_1000197958" description="Putative pseudouridine methyltransferase">
    <location>
        <begin position="1"/>
        <end position="199"/>
    </location>
</feature>
<feature type="binding site" evidence="1">
    <location>
        <position position="132"/>
    </location>
    <ligand>
        <name>S-adenosyl-L-methionine</name>
        <dbReference type="ChEBI" id="CHEBI:59789"/>
    </ligand>
</feature>
<feature type="binding site" evidence="1">
    <location>
        <position position="186"/>
    </location>
    <ligand>
        <name>S-adenosyl-L-methionine</name>
        <dbReference type="ChEBI" id="CHEBI:59789"/>
    </ligand>
</feature>
<gene>
    <name type="ordered locus">VS_II1248</name>
</gene>
<sequence length="199" mass="22305">MRSFVLRARAAPTESKLILEGVGQDAHTEILAHTLMNTIFVAQSHRENVTVHLVLESTKDFSRTITFDSNEITNIGGFHESALLSAVVRAVDASQGMIKEQTRQVEPGITVRTMSFEKLVKELAEDHQLYMMDKKGDFIRDAEIAENPCFLLTDHIPMPKKSYNSLKRLGTEKISLGPNMLFASQCVVLINNELDVRGF</sequence>
<keyword id="KW-0963">Cytoplasm</keyword>
<keyword id="KW-0489">Methyltransferase</keyword>
<keyword id="KW-0949">S-adenosyl-L-methionine</keyword>
<keyword id="KW-0808">Transferase</keyword>